<feature type="chain" id="PRO_1000070539" description="Nucleoid occlusion factor SlmA">
    <location>
        <begin position="1"/>
        <end position="198"/>
    </location>
</feature>
<feature type="domain" description="HTH tetR-type" evidence="1">
    <location>
        <begin position="9"/>
        <end position="70"/>
    </location>
</feature>
<feature type="DNA-binding region" description="H-T-H motif" evidence="1">
    <location>
        <begin position="33"/>
        <end position="52"/>
    </location>
</feature>
<feature type="coiled-coil region" evidence="1">
    <location>
        <begin position="119"/>
        <end position="144"/>
    </location>
</feature>
<comment type="function">
    <text evidence="1">Required for nucleoid occlusion (NO) phenomenon, which prevents Z-ring formation and cell division over the nucleoid. Acts as a DNA-associated cell division inhibitor that binds simultaneously chromosomal DNA and FtsZ, and disrupts the assembly of FtsZ polymers. SlmA-DNA-binding sequences (SBS) are dispersed on non-Ter regions of the chromosome, preventing FtsZ polymerization at these regions.</text>
</comment>
<comment type="subunit">
    <text evidence="1">Homodimer. Interacts with FtsZ.</text>
</comment>
<comment type="subcellular location">
    <subcellularLocation>
        <location evidence="1">Cytoplasm</location>
        <location evidence="1">Nucleoid</location>
    </subcellularLocation>
</comment>
<comment type="similarity">
    <text evidence="1">Belongs to the nucleoid occlusion factor SlmA family.</text>
</comment>
<name>SLMA_YERP3</name>
<organism>
    <name type="scientific">Yersinia pseudotuberculosis serotype O:1b (strain IP 31758)</name>
    <dbReference type="NCBI Taxonomy" id="349747"/>
    <lineage>
        <taxon>Bacteria</taxon>
        <taxon>Pseudomonadati</taxon>
        <taxon>Pseudomonadota</taxon>
        <taxon>Gammaproteobacteria</taxon>
        <taxon>Enterobacterales</taxon>
        <taxon>Yersiniaceae</taxon>
        <taxon>Yersinia</taxon>
    </lineage>
</organism>
<gene>
    <name evidence="1" type="primary">slmA</name>
    <name type="ordered locus">YpsIP31758_0058</name>
</gene>
<sequence>MAEKENTKRNRREEILQALAQMLESSDGSQRITTAKLAANVGVSEAALYRHFPSKTRMFDSLIEFIEDSLMSRINLILQDEKETFNRLRLILLLVLGFAERNPGLTRIMTGHALMFEQDRLQGRINQLFERIEMQLRQVLREKKLRDGQGFIHDEALLATQLLAFCEGMLSRFVRSEFRYCPTQEFDSRWPLIVAQLQ</sequence>
<reference key="1">
    <citation type="journal article" date="2007" name="PLoS Genet.">
        <title>The complete genome sequence of Yersinia pseudotuberculosis IP31758, the causative agent of Far East scarlet-like fever.</title>
        <authorList>
            <person name="Eppinger M."/>
            <person name="Rosovitz M.J."/>
            <person name="Fricke W.F."/>
            <person name="Rasko D.A."/>
            <person name="Kokorina G."/>
            <person name="Fayolle C."/>
            <person name="Lindler L.E."/>
            <person name="Carniel E."/>
            <person name="Ravel J."/>
        </authorList>
    </citation>
    <scope>NUCLEOTIDE SEQUENCE [LARGE SCALE GENOMIC DNA]</scope>
    <source>
        <strain>IP 31758</strain>
    </source>
</reference>
<accession>A7FCT1</accession>
<keyword id="KW-0131">Cell cycle</keyword>
<keyword id="KW-0132">Cell division</keyword>
<keyword id="KW-0175">Coiled coil</keyword>
<keyword id="KW-0963">Cytoplasm</keyword>
<keyword id="KW-0238">DNA-binding</keyword>
<protein>
    <recommendedName>
        <fullName evidence="1">Nucleoid occlusion factor SlmA</fullName>
    </recommendedName>
</protein>
<dbReference type="EMBL" id="CP000720">
    <property type="protein sequence ID" value="ABS46744.1"/>
    <property type="molecule type" value="Genomic_DNA"/>
</dbReference>
<dbReference type="RefSeq" id="WP_002208995.1">
    <property type="nucleotide sequence ID" value="NC_009708.1"/>
</dbReference>
<dbReference type="SMR" id="A7FCT1"/>
<dbReference type="GeneID" id="96663527"/>
<dbReference type="KEGG" id="ypi:YpsIP31758_0058"/>
<dbReference type="HOGENOM" id="CLU_069356_5_0_6"/>
<dbReference type="Proteomes" id="UP000002412">
    <property type="component" value="Chromosome"/>
</dbReference>
<dbReference type="GO" id="GO:0043590">
    <property type="term" value="C:bacterial nucleoid"/>
    <property type="evidence" value="ECO:0007669"/>
    <property type="project" value="UniProtKB-UniRule"/>
</dbReference>
<dbReference type="GO" id="GO:0005737">
    <property type="term" value="C:cytoplasm"/>
    <property type="evidence" value="ECO:0007669"/>
    <property type="project" value="UniProtKB-UniRule"/>
</dbReference>
<dbReference type="GO" id="GO:0003700">
    <property type="term" value="F:DNA-binding transcription factor activity"/>
    <property type="evidence" value="ECO:0007669"/>
    <property type="project" value="TreeGrafter"/>
</dbReference>
<dbReference type="GO" id="GO:0000976">
    <property type="term" value="F:transcription cis-regulatory region binding"/>
    <property type="evidence" value="ECO:0007669"/>
    <property type="project" value="TreeGrafter"/>
</dbReference>
<dbReference type="GO" id="GO:0051301">
    <property type="term" value="P:cell division"/>
    <property type="evidence" value="ECO:0007669"/>
    <property type="project" value="UniProtKB-KW"/>
</dbReference>
<dbReference type="GO" id="GO:0010974">
    <property type="term" value="P:negative regulation of division septum assembly"/>
    <property type="evidence" value="ECO:0007669"/>
    <property type="project" value="InterPro"/>
</dbReference>
<dbReference type="FunFam" id="1.10.357.10:FF:000002">
    <property type="entry name" value="Nucleoid occlusion factor SlmA"/>
    <property type="match status" value="1"/>
</dbReference>
<dbReference type="Gene3D" id="1.10.357.10">
    <property type="entry name" value="Tetracycline Repressor, domain 2"/>
    <property type="match status" value="1"/>
</dbReference>
<dbReference type="HAMAP" id="MF_01839">
    <property type="entry name" value="NO_factor_SlmA"/>
    <property type="match status" value="1"/>
</dbReference>
<dbReference type="InterPro" id="IPR023772">
    <property type="entry name" value="DNA-bd_HTH_TetR-type_CS"/>
</dbReference>
<dbReference type="InterPro" id="IPR009057">
    <property type="entry name" value="Homeodomain-like_sf"/>
</dbReference>
<dbReference type="InterPro" id="IPR050109">
    <property type="entry name" value="HTH-type_TetR-like_transc_reg"/>
</dbReference>
<dbReference type="InterPro" id="IPR001647">
    <property type="entry name" value="HTH_TetR"/>
</dbReference>
<dbReference type="InterPro" id="IPR023769">
    <property type="entry name" value="NO_SlmA"/>
</dbReference>
<dbReference type="InterPro" id="IPR054580">
    <property type="entry name" value="SlmA-like_C"/>
</dbReference>
<dbReference type="InterPro" id="IPR036271">
    <property type="entry name" value="Tet_transcr_reg_TetR-rel_C_sf"/>
</dbReference>
<dbReference type="NCBIfam" id="NF007015">
    <property type="entry name" value="PRK09480.1"/>
    <property type="match status" value="1"/>
</dbReference>
<dbReference type="PANTHER" id="PTHR30055">
    <property type="entry name" value="HTH-TYPE TRANSCRIPTIONAL REGULATOR RUTR"/>
    <property type="match status" value="1"/>
</dbReference>
<dbReference type="PANTHER" id="PTHR30055:SF183">
    <property type="entry name" value="NUCLEOID OCCLUSION FACTOR SLMA"/>
    <property type="match status" value="1"/>
</dbReference>
<dbReference type="Pfam" id="PF22276">
    <property type="entry name" value="SlmA-like_C"/>
    <property type="match status" value="1"/>
</dbReference>
<dbReference type="Pfam" id="PF00440">
    <property type="entry name" value="TetR_N"/>
    <property type="match status" value="1"/>
</dbReference>
<dbReference type="SUPFAM" id="SSF46689">
    <property type="entry name" value="Homeodomain-like"/>
    <property type="match status" value="1"/>
</dbReference>
<dbReference type="SUPFAM" id="SSF48498">
    <property type="entry name" value="Tetracyclin repressor-like, C-terminal domain"/>
    <property type="match status" value="1"/>
</dbReference>
<dbReference type="PROSITE" id="PS01081">
    <property type="entry name" value="HTH_TETR_1"/>
    <property type="match status" value="1"/>
</dbReference>
<dbReference type="PROSITE" id="PS50977">
    <property type="entry name" value="HTH_TETR_2"/>
    <property type="match status" value="1"/>
</dbReference>
<evidence type="ECO:0000255" key="1">
    <source>
        <dbReference type="HAMAP-Rule" id="MF_01839"/>
    </source>
</evidence>
<proteinExistence type="inferred from homology"/>